<evidence type="ECO:0000250" key="1"/>
<evidence type="ECO:0000256" key="2">
    <source>
        <dbReference type="SAM" id="MobiDB-lite"/>
    </source>
</evidence>
<evidence type="ECO:0000305" key="3"/>
<feature type="chain" id="PRO_0000078513" description="Chaperone protein dnaK2">
    <location>
        <begin position="1"/>
        <end position="633"/>
    </location>
</feature>
<feature type="region of interest" description="Disordered" evidence="2">
    <location>
        <begin position="600"/>
        <end position="633"/>
    </location>
</feature>
<feature type="compositionally biased region" description="Low complexity" evidence="2">
    <location>
        <begin position="608"/>
        <end position="619"/>
    </location>
</feature>
<feature type="compositionally biased region" description="Acidic residues" evidence="2">
    <location>
        <begin position="620"/>
        <end position="633"/>
    </location>
</feature>
<feature type="modified residue" description="Phosphothreonine; by autocatalysis" evidence="1">
    <location>
        <position position="197"/>
    </location>
</feature>
<comment type="function">
    <text evidence="1">Acts as a chaperone.</text>
</comment>
<comment type="induction">
    <text evidence="1">By stress conditions e.g. heat shock (By similarity).</text>
</comment>
<comment type="similarity">
    <text evidence="3">Belongs to the heat shock protein 70 family.</text>
</comment>
<gene>
    <name type="primary">dnaK2</name>
    <name type="ordered locus">Pro_1871</name>
</gene>
<keyword id="KW-0067">ATP-binding</keyword>
<keyword id="KW-0143">Chaperone</keyword>
<keyword id="KW-0547">Nucleotide-binding</keyword>
<keyword id="KW-0597">Phosphoprotein</keyword>
<keyword id="KW-1185">Reference proteome</keyword>
<keyword id="KW-0346">Stress response</keyword>
<proteinExistence type="inferred from homology"/>
<reference key="1">
    <citation type="journal article" date="2003" name="Proc. Natl. Acad. Sci. U.S.A.">
        <title>Genome sequence of the cyanobacterium Prochlorococcus marinus SS120, a nearly minimal oxyphototrophic genome.</title>
        <authorList>
            <person name="Dufresne A."/>
            <person name="Salanoubat M."/>
            <person name="Partensky F."/>
            <person name="Artiguenave F."/>
            <person name="Axmann I.M."/>
            <person name="Barbe V."/>
            <person name="Duprat S."/>
            <person name="Galperin M.Y."/>
            <person name="Koonin E.V."/>
            <person name="Le Gall F."/>
            <person name="Makarova K.S."/>
            <person name="Ostrowski M."/>
            <person name="Oztas S."/>
            <person name="Robert C."/>
            <person name="Rogozin I.B."/>
            <person name="Scanlan D.J."/>
            <person name="Tandeau de Marsac N."/>
            <person name="Weissenbach J."/>
            <person name="Wincker P."/>
            <person name="Wolf Y.I."/>
            <person name="Hess W.R."/>
        </authorList>
    </citation>
    <scope>NUCLEOTIDE SEQUENCE [LARGE SCALE GENOMIC DNA]</scope>
    <source>
        <strain>SARG / CCMP1375 / SS120</strain>
    </source>
</reference>
<organism>
    <name type="scientific">Prochlorococcus marinus (strain SARG / CCMP1375 / SS120)</name>
    <dbReference type="NCBI Taxonomy" id="167539"/>
    <lineage>
        <taxon>Bacteria</taxon>
        <taxon>Bacillati</taxon>
        <taxon>Cyanobacteriota</taxon>
        <taxon>Cyanophyceae</taxon>
        <taxon>Synechococcales</taxon>
        <taxon>Prochlorococcaceae</taxon>
        <taxon>Prochlorococcus</taxon>
    </lineage>
</organism>
<name>DNAK2_PROMA</name>
<sequence length="633" mass="68228">MGKVVGIDLGTTNSCVAVMEGGKPTVIANAEGFRTTPSVVAYTKNQDQLVGQIAKRQAVMNPENTFYSAKRFVGRRVDEVNEESKEVSYSVEKSGSSVKLKCPVLDKQFSPEEVAAQVLRKLSEDAGKYLGENINQAVITVPAYFNDSQRQATKDAGKIAGLEVLRIINEPTAAALAYGLDRKSNERILVFDLGGGTFDVSVLEVGDGVFEVLSTSGDTHLGGDDFDKVIVDHLAATFKANEGIDLRQDKQALQRLTEAAEKAKIELSNATQSEINLPFITATPEGPKHVDLTLTRAKFEELASNLIDRCRVPVEQALKDAKLSTGEIDEIVMVGGSTRMPAVKELVKRVTGKDPNQTVNPDEVVAVGAAIQGGVLAGEVKDILLLDVTPLSLGVETLGGVMTKMITRNTTVPTKKTETYSTAVDGQTNVEIHVLQGEREMASDNKSLGTFRLDGIPPSPRGVPQIEVTFDIDANGILSVTAKDKGSGKEQSISITGASTLSDNEVEKMVKDAETNATADKEKRDRIDIKNQAETLVYQTEKQLGELGDKVDEEAKAKVEAKRIQLKEATEKDDYETMKTLVEDLQKELYSLGASVYQQSNAASQAADGTSSESNNSTEGNDDVIDAEFTESK</sequence>
<protein>
    <recommendedName>
        <fullName>Chaperone protein dnaK2</fullName>
    </recommendedName>
    <alternativeName>
        <fullName>HSP70-2</fullName>
    </alternativeName>
    <alternativeName>
        <fullName>Heat shock 70 kDa protein 2</fullName>
    </alternativeName>
    <alternativeName>
        <fullName>Heat shock protein 70-2</fullName>
    </alternativeName>
</protein>
<dbReference type="EMBL" id="AE017126">
    <property type="protein sequence ID" value="AAQ00915.1"/>
    <property type="molecule type" value="Genomic_DNA"/>
</dbReference>
<dbReference type="RefSeq" id="NP_876262.1">
    <property type="nucleotide sequence ID" value="NC_005042.1"/>
</dbReference>
<dbReference type="SMR" id="Q7V9G2"/>
<dbReference type="STRING" id="167539.Pro_1871"/>
<dbReference type="EnsemblBacteria" id="AAQ00915">
    <property type="protein sequence ID" value="AAQ00915"/>
    <property type="gene ID" value="Pro_1871"/>
</dbReference>
<dbReference type="KEGG" id="pma:Pro_1871"/>
<dbReference type="PATRIC" id="fig|167539.5.peg.1973"/>
<dbReference type="eggNOG" id="COG0443">
    <property type="taxonomic scope" value="Bacteria"/>
</dbReference>
<dbReference type="HOGENOM" id="CLU_005965_2_1_3"/>
<dbReference type="OrthoDB" id="9766019at2"/>
<dbReference type="Proteomes" id="UP000001420">
    <property type="component" value="Chromosome"/>
</dbReference>
<dbReference type="GO" id="GO:0005524">
    <property type="term" value="F:ATP binding"/>
    <property type="evidence" value="ECO:0007669"/>
    <property type="project" value="UniProtKB-UniRule"/>
</dbReference>
<dbReference type="GO" id="GO:0140662">
    <property type="term" value="F:ATP-dependent protein folding chaperone"/>
    <property type="evidence" value="ECO:0007669"/>
    <property type="project" value="InterPro"/>
</dbReference>
<dbReference type="GO" id="GO:0051082">
    <property type="term" value="F:unfolded protein binding"/>
    <property type="evidence" value="ECO:0007669"/>
    <property type="project" value="InterPro"/>
</dbReference>
<dbReference type="CDD" id="cd10234">
    <property type="entry name" value="ASKHA_NBD_HSP70_DnaK-like"/>
    <property type="match status" value="1"/>
</dbReference>
<dbReference type="FunFam" id="2.60.34.10:FF:000014">
    <property type="entry name" value="Chaperone protein DnaK HSP70"/>
    <property type="match status" value="1"/>
</dbReference>
<dbReference type="FunFam" id="1.20.1270.10:FF:000001">
    <property type="entry name" value="Molecular chaperone DnaK"/>
    <property type="match status" value="1"/>
</dbReference>
<dbReference type="FunFam" id="3.30.420.40:FF:000004">
    <property type="entry name" value="Molecular chaperone DnaK"/>
    <property type="match status" value="1"/>
</dbReference>
<dbReference type="FunFam" id="3.90.640.10:FF:000003">
    <property type="entry name" value="Molecular chaperone DnaK"/>
    <property type="match status" value="1"/>
</dbReference>
<dbReference type="Gene3D" id="1.20.1270.10">
    <property type="match status" value="1"/>
</dbReference>
<dbReference type="Gene3D" id="3.30.420.40">
    <property type="match status" value="2"/>
</dbReference>
<dbReference type="Gene3D" id="3.90.640.10">
    <property type="entry name" value="Actin, Chain A, domain 4"/>
    <property type="match status" value="1"/>
</dbReference>
<dbReference type="Gene3D" id="2.60.34.10">
    <property type="entry name" value="Substrate Binding Domain Of DNAk, Chain A, domain 1"/>
    <property type="match status" value="1"/>
</dbReference>
<dbReference type="HAMAP" id="MF_00332">
    <property type="entry name" value="DnaK"/>
    <property type="match status" value="1"/>
</dbReference>
<dbReference type="InterPro" id="IPR043129">
    <property type="entry name" value="ATPase_NBD"/>
</dbReference>
<dbReference type="InterPro" id="IPR012725">
    <property type="entry name" value="Chaperone_DnaK"/>
</dbReference>
<dbReference type="InterPro" id="IPR018181">
    <property type="entry name" value="Heat_shock_70_CS"/>
</dbReference>
<dbReference type="InterPro" id="IPR029048">
    <property type="entry name" value="HSP70_C_sf"/>
</dbReference>
<dbReference type="InterPro" id="IPR029047">
    <property type="entry name" value="HSP70_peptide-bd_sf"/>
</dbReference>
<dbReference type="InterPro" id="IPR013126">
    <property type="entry name" value="Hsp_70_fam"/>
</dbReference>
<dbReference type="NCBIfam" id="NF001413">
    <property type="entry name" value="PRK00290.1"/>
    <property type="match status" value="1"/>
</dbReference>
<dbReference type="NCBIfam" id="NF003520">
    <property type="entry name" value="PRK05183.1"/>
    <property type="match status" value="1"/>
</dbReference>
<dbReference type="NCBIfam" id="TIGR02350">
    <property type="entry name" value="prok_dnaK"/>
    <property type="match status" value="1"/>
</dbReference>
<dbReference type="PANTHER" id="PTHR19375">
    <property type="entry name" value="HEAT SHOCK PROTEIN 70KDA"/>
    <property type="match status" value="1"/>
</dbReference>
<dbReference type="Pfam" id="PF00012">
    <property type="entry name" value="HSP70"/>
    <property type="match status" value="1"/>
</dbReference>
<dbReference type="PRINTS" id="PR00301">
    <property type="entry name" value="HEATSHOCK70"/>
</dbReference>
<dbReference type="SUPFAM" id="SSF53067">
    <property type="entry name" value="Actin-like ATPase domain"/>
    <property type="match status" value="2"/>
</dbReference>
<dbReference type="SUPFAM" id="SSF100934">
    <property type="entry name" value="Heat shock protein 70kD (HSP70), C-terminal subdomain"/>
    <property type="match status" value="1"/>
</dbReference>
<dbReference type="SUPFAM" id="SSF100920">
    <property type="entry name" value="Heat shock protein 70kD (HSP70), peptide-binding domain"/>
    <property type="match status" value="1"/>
</dbReference>
<dbReference type="PROSITE" id="PS00297">
    <property type="entry name" value="HSP70_1"/>
    <property type="match status" value="1"/>
</dbReference>
<dbReference type="PROSITE" id="PS00329">
    <property type="entry name" value="HSP70_2"/>
    <property type="match status" value="1"/>
</dbReference>
<dbReference type="PROSITE" id="PS01036">
    <property type="entry name" value="HSP70_3"/>
    <property type="match status" value="1"/>
</dbReference>
<accession>Q7V9G2</accession>